<name>AGUA_SHEB9</name>
<accession>A9KYH3</accession>
<proteinExistence type="inferred from homology"/>
<dbReference type="EC" id="3.5.3.12" evidence="1"/>
<dbReference type="EMBL" id="CP000891">
    <property type="protein sequence ID" value="ABX50444.1"/>
    <property type="molecule type" value="Genomic_DNA"/>
</dbReference>
<dbReference type="RefSeq" id="WP_012197447.1">
    <property type="nucleotide sequence ID" value="NC_009997.1"/>
</dbReference>
<dbReference type="SMR" id="A9KYH3"/>
<dbReference type="GeneID" id="11773335"/>
<dbReference type="KEGG" id="sbn:Sbal195_3282"/>
<dbReference type="HOGENOM" id="CLU_037682_1_0_6"/>
<dbReference type="Proteomes" id="UP000000770">
    <property type="component" value="Chromosome"/>
</dbReference>
<dbReference type="GO" id="GO:0047632">
    <property type="term" value="F:agmatine deiminase activity"/>
    <property type="evidence" value="ECO:0007669"/>
    <property type="project" value="UniProtKB-UniRule"/>
</dbReference>
<dbReference type="GO" id="GO:0004668">
    <property type="term" value="F:protein-arginine deiminase activity"/>
    <property type="evidence" value="ECO:0007669"/>
    <property type="project" value="InterPro"/>
</dbReference>
<dbReference type="GO" id="GO:0009446">
    <property type="term" value="P:putrescine biosynthetic process"/>
    <property type="evidence" value="ECO:0007669"/>
    <property type="project" value="InterPro"/>
</dbReference>
<dbReference type="Gene3D" id="3.75.10.10">
    <property type="entry name" value="L-arginine/glycine Amidinotransferase, Chain A"/>
    <property type="match status" value="1"/>
</dbReference>
<dbReference type="HAMAP" id="MF_01841">
    <property type="entry name" value="Agmatine_deimin"/>
    <property type="match status" value="1"/>
</dbReference>
<dbReference type="InterPro" id="IPR017754">
    <property type="entry name" value="Agmatine_deiminase"/>
</dbReference>
<dbReference type="InterPro" id="IPR007466">
    <property type="entry name" value="Peptidyl-Arg-deiminase_porph"/>
</dbReference>
<dbReference type="NCBIfam" id="TIGR03380">
    <property type="entry name" value="agmatine_aguA"/>
    <property type="match status" value="1"/>
</dbReference>
<dbReference type="NCBIfam" id="NF010070">
    <property type="entry name" value="PRK13551.1"/>
    <property type="match status" value="1"/>
</dbReference>
<dbReference type="PANTHER" id="PTHR31377">
    <property type="entry name" value="AGMATINE DEIMINASE-RELATED"/>
    <property type="match status" value="1"/>
</dbReference>
<dbReference type="PANTHER" id="PTHR31377:SF0">
    <property type="entry name" value="AGMATINE DEIMINASE-RELATED"/>
    <property type="match status" value="1"/>
</dbReference>
<dbReference type="Pfam" id="PF04371">
    <property type="entry name" value="PAD_porph"/>
    <property type="match status" value="1"/>
</dbReference>
<dbReference type="SUPFAM" id="SSF55909">
    <property type="entry name" value="Pentein"/>
    <property type="match status" value="1"/>
</dbReference>
<protein>
    <recommendedName>
        <fullName evidence="1">Putative agmatine deiminase</fullName>
        <ecNumber evidence="1">3.5.3.12</ecNumber>
    </recommendedName>
    <alternativeName>
        <fullName evidence="1">Agmatine iminohydrolase</fullName>
    </alternativeName>
</protein>
<keyword id="KW-0378">Hydrolase</keyword>
<gene>
    <name evidence="1" type="primary">aguA</name>
    <name type="ordered locus">Sbal195_3282</name>
</gene>
<evidence type="ECO:0000255" key="1">
    <source>
        <dbReference type="HAMAP-Rule" id="MF_01841"/>
    </source>
</evidence>
<sequence>MTNANVDATQLTTKPSQDGFYMPAEWAAQQAVWMIWPYRPDNWRSAGAYAQATFAKVADAIGGATPVYMGVPKAFLAEAKTVMPSHVTLVEMDSNDCWARDTGPTVVVNAEGECRGVDWGFNAWGGHNGGLYFPWDKDEQVAQQMLKQHGFARYSAPLILEGGSIHVDGEGTCMTSAECLLNANRNPDLTKEQIEDLLRDYLNVKQFIWLQDGVYMDETDGHIDNMCCFARPGEVILHWTDDETDPQYPRSKAALDVLQNTVDAQGRKLKIHLLPQPGPLYCTEEESLGVTEGTGVPRTAGERLAGSYVNFLITNNRIVFPLLDPTTDDIAAQKLQEIFPEYEIVGVPAREILLGGGNIHCITQQIPSGK</sequence>
<feature type="chain" id="PRO_1000088467" description="Putative agmatine deiminase">
    <location>
        <begin position="1"/>
        <end position="370"/>
    </location>
</feature>
<feature type="active site" description="Amidino-cysteine intermediate" evidence="1">
    <location>
        <position position="361"/>
    </location>
</feature>
<reference key="1">
    <citation type="submission" date="2007-11" db="EMBL/GenBank/DDBJ databases">
        <title>Complete sequence of chromosome of Shewanella baltica OS195.</title>
        <authorList>
            <consortium name="US DOE Joint Genome Institute"/>
            <person name="Copeland A."/>
            <person name="Lucas S."/>
            <person name="Lapidus A."/>
            <person name="Barry K."/>
            <person name="Glavina del Rio T."/>
            <person name="Dalin E."/>
            <person name="Tice H."/>
            <person name="Pitluck S."/>
            <person name="Chain P."/>
            <person name="Malfatti S."/>
            <person name="Shin M."/>
            <person name="Vergez L."/>
            <person name="Schmutz J."/>
            <person name="Larimer F."/>
            <person name="Land M."/>
            <person name="Hauser L."/>
            <person name="Kyrpides N."/>
            <person name="Kim E."/>
            <person name="Brettar I."/>
            <person name="Rodrigues J."/>
            <person name="Konstantinidis K."/>
            <person name="Klappenbach J."/>
            <person name="Hofle M."/>
            <person name="Tiedje J."/>
            <person name="Richardson P."/>
        </authorList>
    </citation>
    <scope>NUCLEOTIDE SEQUENCE [LARGE SCALE GENOMIC DNA]</scope>
    <source>
        <strain>OS195</strain>
    </source>
</reference>
<organism>
    <name type="scientific">Shewanella baltica (strain OS195)</name>
    <dbReference type="NCBI Taxonomy" id="399599"/>
    <lineage>
        <taxon>Bacteria</taxon>
        <taxon>Pseudomonadati</taxon>
        <taxon>Pseudomonadota</taxon>
        <taxon>Gammaproteobacteria</taxon>
        <taxon>Alteromonadales</taxon>
        <taxon>Shewanellaceae</taxon>
        <taxon>Shewanella</taxon>
    </lineage>
</organism>
<comment type="catalytic activity">
    <reaction evidence="1">
        <text>agmatine + H2O = N-carbamoylputrescine + NH4(+)</text>
        <dbReference type="Rhea" id="RHEA:18037"/>
        <dbReference type="ChEBI" id="CHEBI:15377"/>
        <dbReference type="ChEBI" id="CHEBI:28938"/>
        <dbReference type="ChEBI" id="CHEBI:58145"/>
        <dbReference type="ChEBI" id="CHEBI:58318"/>
        <dbReference type="EC" id="3.5.3.12"/>
    </reaction>
</comment>
<comment type="similarity">
    <text evidence="1">Belongs to the agmatine deiminase family.</text>
</comment>